<organism>
    <name type="scientific">Salmonella paratyphi A (strain AKU_12601)</name>
    <dbReference type="NCBI Taxonomy" id="554290"/>
    <lineage>
        <taxon>Bacteria</taxon>
        <taxon>Pseudomonadati</taxon>
        <taxon>Pseudomonadota</taxon>
        <taxon>Gammaproteobacteria</taxon>
        <taxon>Enterobacterales</taxon>
        <taxon>Enterobacteriaceae</taxon>
        <taxon>Salmonella</taxon>
    </lineage>
</organism>
<protein>
    <recommendedName>
        <fullName evidence="1">D-serine dehydratase</fullName>
        <ecNumber evidence="1">4.3.1.18</ecNumber>
    </recommendedName>
    <alternativeName>
        <fullName evidence="1">D-serine deaminase</fullName>
        <shortName evidence="1">DSD</shortName>
    </alternativeName>
</protein>
<dbReference type="EC" id="4.3.1.18" evidence="1"/>
<dbReference type="EMBL" id="FM200053">
    <property type="protein sequence ID" value="CAR61683.1"/>
    <property type="molecule type" value="Genomic_DNA"/>
</dbReference>
<dbReference type="RefSeq" id="WP_000427998.1">
    <property type="nucleotide sequence ID" value="NC_011147.1"/>
</dbReference>
<dbReference type="SMR" id="B5BII6"/>
<dbReference type="KEGG" id="sek:SSPA3411"/>
<dbReference type="HOGENOM" id="CLU_035707_0_0_6"/>
<dbReference type="Proteomes" id="UP000001869">
    <property type="component" value="Chromosome"/>
</dbReference>
<dbReference type="GO" id="GO:0008721">
    <property type="term" value="F:D-serine ammonia-lyase activity"/>
    <property type="evidence" value="ECO:0007669"/>
    <property type="project" value="UniProtKB-EC"/>
</dbReference>
<dbReference type="GO" id="GO:0016836">
    <property type="term" value="F:hydro-lyase activity"/>
    <property type="evidence" value="ECO:0007669"/>
    <property type="project" value="UniProtKB-UniRule"/>
</dbReference>
<dbReference type="GO" id="GO:0030170">
    <property type="term" value="F:pyridoxal phosphate binding"/>
    <property type="evidence" value="ECO:0007669"/>
    <property type="project" value="InterPro"/>
</dbReference>
<dbReference type="GO" id="GO:0036088">
    <property type="term" value="P:D-serine catabolic process"/>
    <property type="evidence" value="ECO:0007669"/>
    <property type="project" value="TreeGrafter"/>
</dbReference>
<dbReference type="GO" id="GO:0009097">
    <property type="term" value="P:isoleucine biosynthetic process"/>
    <property type="evidence" value="ECO:0007669"/>
    <property type="project" value="TreeGrafter"/>
</dbReference>
<dbReference type="CDD" id="cd06447">
    <property type="entry name" value="D-Ser-dehyd"/>
    <property type="match status" value="1"/>
</dbReference>
<dbReference type="FunFam" id="3.40.50.1100:FF:000018">
    <property type="entry name" value="D-serine dehydratase"/>
    <property type="match status" value="1"/>
</dbReference>
<dbReference type="Gene3D" id="3.40.50.1100">
    <property type="match status" value="2"/>
</dbReference>
<dbReference type="HAMAP" id="MF_01030">
    <property type="entry name" value="D_Ser_dehydrat"/>
    <property type="match status" value="1"/>
</dbReference>
<dbReference type="InterPro" id="IPR011780">
    <property type="entry name" value="D_Ser_am_lyase"/>
</dbReference>
<dbReference type="InterPro" id="IPR050147">
    <property type="entry name" value="Ser/Thr_Dehydratase"/>
</dbReference>
<dbReference type="InterPro" id="IPR000634">
    <property type="entry name" value="Ser/Thr_deHydtase_PyrdxlP-BS"/>
</dbReference>
<dbReference type="InterPro" id="IPR001926">
    <property type="entry name" value="TrpB-like_PALP"/>
</dbReference>
<dbReference type="InterPro" id="IPR036052">
    <property type="entry name" value="TrpB-like_PALP_sf"/>
</dbReference>
<dbReference type="NCBIfam" id="TIGR02035">
    <property type="entry name" value="D_Ser_am_lyase"/>
    <property type="match status" value="1"/>
</dbReference>
<dbReference type="NCBIfam" id="NF002823">
    <property type="entry name" value="PRK02991.1"/>
    <property type="match status" value="1"/>
</dbReference>
<dbReference type="PANTHER" id="PTHR48078:SF9">
    <property type="entry name" value="D-SERINE DEHYDRATASE"/>
    <property type="match status" value="1"/>
</dbReference>
<dbReference type="PANTHER" id="PTHR48078">
    <property type="entry name" value="THREONINE DEHYDRATASE, MITOCHONDRIAL-RELATED"/>
    <property type="match status" value="1"/>
</dbReference>
<dbReference type="Pfam" id="PF00291">
    <property type="entry name" value="PALP"/>
    <property type="match status" value="1"/>
</dbReference>
<dbReference type="SUPFAM" id="SSF53686">
    <property type="entry name" value="Tryptophan synthase beta subunit-like PLP-dependent enzymes"/>
    <property type="match status" value="1"/>
</dbReference>
<dbReference type="PROSITE" id="PS00165">
    <property type="entry name" value="DEHYDRATASE_SER_THR"/>
    <property type="match status" value="1"/>
</dbReference>
<keyword id="KW-0456">Lyase</keyword>
<keyword id="KW-0663">Pyridoxal phosphate</keyword>
<proteinExistence type="inferred from homology"/>
<sequence length="440" mass="47418">MENIQKLIARYPLVEDLVALKETTWFNPGTTSLAQGLPYVGLTEQDVNAAHDRLARFAPYLAKAFPQTAAAGGMIESDVVAIPAMQKRLEKEYGQTIDGEMLLKKDSHLAISGSIKARGGIYEVLTHAEKLALEAGLLTTDDDYSVLLSPEFKQFFSQHSIAVGSTGNLGLSIGIMSACIGFKVTVHMSADARAWKKAKLRSHGVTVVEYEDDYGVAVEQGRKAAQSDPNCFFIDDENSRTLFLGYAVAGQRLKAQFAQQGRVVDASHPLFVYLPCGVGGGPGGVAFGLKLAFGDNVHCFFAEPTHSPCMLLGVYTGLHDAISVQDIGIDNLTAADGLAVGRASGFVGRAMERLLDGLYTLDDQTMYDMLGWLAQEEGIRLEPSALAGMAGPQRICAATEYQQRHGFSQTQLGNATHLVWATGGGMVPEDEMEQYLAKGR</sequence>
<feature type="chain" id="PRO_1000197950" description="D-serine dehydratase">
    <location>
        <begin position="1"/>
        <end position="440"/>
    </location>
</feature>
<feature type="modified residue" description="N6-(pyridoxal phosphate)lysine" evidence="1">
    <location>
        <position position="116"/>
    </location>
</feature>
<accession>B5BII6</accession>
<name>SDHD_SALPK</name>
<evidence type="ECO:0000255" key="1">
    <source>
        <dbReference type="HAMAP-Rule" id="MF_01030"/>
    </source>
</evidence>
<gene>
    <name evidence="1" type="primary">dsdA</name>
    <name type="ordered locus">SSPA3411</name>
</gene>
<reference key="1">
    <citation type="journal article" date="2009" name="BMC Genomics">
        <title>Pseudogene accumulation in the evolutionary histories of Salmonella enterica serovars Paratyphi A and Typhi.</title>
        <authorList>
            <person name="Holt K.E."/>
            <person name="Thomson N.R."/>
            <person name="Wain J."/>
            <person name="Langridge G.C."/>
            <person name="Hasan R."/>
            <person name="Bhutta Z.A."/>
            <person name="Quail M.A."/>
            <person name="Norbertczak H."/>
            <person name="Walker D."/>
            <person name="Simmonds M."/>
            <person name="White B."/>
            <person name="Bason N."/>
            <person name="Mungall K."/>
            <person name="Dougan G."/>
            <person name="Parkhill J."/>
        </authorList>
    </citation>
    <scope>NUCLEOTIDE SEQUENCE [LARGE SCALE GENOMIC DNA]</scope>
    <source>
        <strain>AKU_12601</strain>
    </source>
</reference>
<comment type="catalytic activity">
    <reaction evidence="1">
        <text>D-serine = pyruvate + NH4(+)</text>
        <dbReference type="Rhea" id="RHEA:13977"/>
        <dbReference type="ChEBI" id="CHEBI:15361"/>
        <dbReference type="ChEBI" id="CHEBI:28938"/>
        <dbReference type="ChEBI" id="CHEBI:35247"/>
        <dbReference type="EC" id="4.3.1.18"/>
    </reaction>
</comment>
<comment type="cofactor">
    <cofactor evidence="1">
        <name>pyridoxal 5'-phosphate</name>
        <dbReference type="ChEBI" id="CHEBI:597326"/>
    </cofactor>
</comment>
<comment type="subunit">
    <text evidence="1">Monomer.</text>
</comment>
<comment type="similarity">
    <text evidence="1">Belongs to the serine/threonine dehydratase family. DsdA subfamily.</text>
</comment>